<feature type="chain" id="PRO_1000091052" description="Aspartate--tRNA ligase">
    <location>
        <begin position="1"/>
        <end position="582"/>
    </location>
</feature>
<feature type="region of interest" description="Aspartate" evidence="1">
    <location>
        <begin position="198"/>
        <end position="201"/>
    </location>
</feature>
<feature type="binding site" evidence="1">
    <location>
        <position position="174"/>
    </location>
    <ligand>
        <name>L-aspartate</name>
        <dbReference type="ChEBI" id="CHEBI:29991"/>
    </ligand>
</feature>
<feature type="binding site" evidence="1">
    <location>
        <begin position="220"/>
        <end position="222"/>
    </location>
    <ligand>
        <name>ATP</name>
        <dbReference type="ChEBI" id="CHEBI:30616"/>
    </ligand>
</feature>
<feature type="binding site" evidence="1">
    <location>
        <position position="220"/>
    </location>
    <ligand>
        <name>L-aspartate</name>
        <dbReference type="ChEBI" id="CHEBI:29991"/>
    </ligand>
</feature>
<feature type="binding site" evidence="1">
    <location>
        <position position="229"/>
    </location>
    <ligand>
        <name>ATP</name>
        <dbReference type="ChEBI" id="CHEBI:30616"/>
    </ligand>
</feature>
<feature type="binding site" evidence="1">
    <location>
        <position position="443"/>
    </location>
    <ligand>
        <name>L-aspartate</name>
        <dbReference type="ChEBI" id="CHEBI:29991"/>
    </ligand>
</feature>
<feature type="binding site" evidence="1">
    <location>
        <position position="477"/>
    </location>
    <ligand>
        <name>ATP</name>
        <dbReference type="ChEBI" id="CHEBI:30616"/>
    </ligand>
</feature>
<feature type="binding site" evidence="1">
    <location>
        <position position="484"/>
    </location>
    <ligand>
        <name>L-aspartate</name>
        <dbReference type="ChEBI" id="CHEBI:29991"/>
    </ligand>
</feature>
<feature type="binding site" evidence="1">
    <location>
        <begin position="529"/>
        <end position="532"/>
    </location>
    <ligand>
        <name>ATP</name>
        <dbReference type="ChEBI" id="CHEBI:30616"/>
    </ligand>
</feature>
<dbReference type="EC" id="6.1.1.12" evidence="1"/>
<dbReference type="EMBL" id="CP000829">
    <property type="protein sequence ID" value="ACI62016.1"/>
    <property type="molecule type" value="Genomic_DNA"/>
</dbReference>
<dbReference type="SMR" id="B5XJ82"/>
<dbReference type="KEGG" id="soz:Spy49_1768c"/>
<dbReference type="HOGENOM" id="CLU_014330_3_2_9"/>
<dbReference type="Proteomes" id="UP000001039">
    <property type="component" value="Chromosome"/>
</dbReference>
<dbReference type="GO" id="GO:0005737">
    <property type="term" value="C:cytoplasm"/>
    <property type="evidence" value="ECO:0007669"/>
    <property type="project" value="UniProtKB-SubCell"/>
</dbReference>
<dbReference type="GO" id="GO:0004815">
    <property type="term" value="F:aspartate-tRNA ligase activity"/>
    <property type="evidence" value="ECO:0007669"/>
    <property type="project" value="UniProtKB-UniRule"/>
</dbReference>
<dbReference type="GO" id="GO:0005524">
    <property type="term" value="F:ATP binding"/>
    <property type="evidence" value="ECO:0007669"/>
    <property type="project" value="UniProtKB-UniRule"/>
</dbReference>
<dbReference type="GO" id="GO:0140096">
    <property type="term" value="F:catalytic activity, acting on a protein"/>
    <property type="evidence" value="ECO:0007669"/>
    <property type="project" value="UniProtKB-ARBA"/>
</dbReference>
<dbReference type="GO" id="GO:0003676">
    <property type="term" value="F:nucleic acid binding"/>
    <property type="evidence" value="ECO:0007669"/>
    <property type="project" value="InterPro"/>
</dbReference>
<dbReference type="GO" id="GO:0016740">
    <property type="term" value="F:transferase activity"/>
    <property type="evidence" value="ECO:0007669"/>
    <property type="project" value="UniProtKB-ARBA"/>
</dbReference>
<dbReference type="GO" id="GO:0006422">
    <property type="term" value="P:aspartyl-tRNA aminoacylation"/>
    <property type="evidence" value="ECO:0007669"/>
    <property type="project" value="UniProtKB-UniRule"/>
</dbReference>
<dbReference type="CDD" id="cd00777">
    <property type="entry name" value="AspRS_core"/>
    <property type="match status" value="1"/>
</dbReference>
<dbReference type="CDD" id="cd04317">
    <property type="entry name" value="EcAspRS_like_N"/>
    <property type="match status" value="1"/>
</dbReference>
<dbReference type="Gene3D" id="3.30.930.10">
    <property type="entry name" value="Bira Bifunctional Protein, Domain 2"/>
    <property type="match status" value="1"/>
</dbReference>
<dbReference type="Gene3D" id="3.30.1360.30">
    <property type="entry name" value="GAD-like domain"/>
    <property type="match status" value="1"/>
</dbReference>
<dbReference type="Gene3D" id="2.40.50.140">
    <property type="entry name" value="Nucleic acid-binding proteins"/>
    <property type="match status" value="1"/>
</dbReference>
<dbReference type="HAMAP" id="MF_00044">
    <property type="entry name" value="Asp_tRNA_synth_type1"/>
    <property type="match status" value="1"/>
</dbReference>
<dbReference type="InterPro" id="IPR004364">
    <property type="entry name" value="Aa-tRNA-synt_II"/>
</dbReference>
<dbReference type="InterPro" id="IPR006195">
    <property type="entry name" value="aa-tRNA-synth_II"/>
</dbReference>
<dbReference type="InterPro" id="IPR045864">
    <property type="entry name" value="aa-tRNA-synth_II/BPL/LPL"/>
</dbReference>
<dbReference type="InterPro" id="IPR004524">
    <property type="entry name" value="Asp-tRNA-ligase_1"/>
</dbReference>
<dbReference type="InterPro" id="IPR047089">
    <property type="entry name" value="Asp-tRNA-ligase_1_N"/>
</dbReference>
<dbReference type="InterPro" id="IPR002312">
    <property type="entry name" value="Asp/Asn-tRNA-synth_IIb"/>
</dbReference>
<dbReference type="InterPro" id="IPR047090">
    <property type="entry name" value="AspRS_core"/>
</dbReference>
<dbReference type="InterPro" id="IPR004115">
    <property type="entry name" value="GAD-like_sf"/>
</dbReference>
<dbReference type="InterPro" id="IPR029351">
    <property type="entry name" value="GAD_dom"/>
</dbReference>
<dbReference type="InterPro" id="IPR012340">
    <property type="entry name" value="NA-bd_OB-fold"/>
</dbReference>
<dbReference type="InterPro" id="IPR004365">
    <property type="entry name" value="NA-bd_OB_tRNA"/>
</dbReference>
<dbReference type="NCBIfam" id="TIGR00459">
    <property type="entry name" value="aspS_bact"/>
    <property type="match status" value="1"/>
</dbReference>
<dbReference type="NCBIfam" id="NF001750">
    <property type="entry name" value="PRK00476.1"/>
    <property type="match status" value="1"/>
</dbReference>
<dbReference type="PANTHER" id="PTHR22594:SF5">
    <property type="entry name" value="ASPARTATE--TRNA LIGASE, MITOCHONDRIAL"/>
    <property type="match status" value="1"/>
</dbReference>
<dbReference type="PANTHER" id="PTHR22594">
    <property type="entry name" value="ASPARTYL/LYSYL-TRNA SYNTHETASE"/>
    <property type="match status" value="1"/>
</dbReference>
<dbReference type="Pfam" id="PF02938">
    <property type="entry name" value="GAD"/>
    <property type="match status" value="1"/>
</dbReference>
<dbReference type="Pfam" id="PF00152">
    <property type="entry name" value="tRNA-synt_2"/>
    <property type="match status" value="1"/>
</dbReference>
<dbReference type="Pfam" id="PF01336">
    <property type="entry name" value="tRNA_anti-codon"/>
    <property type="match status" value="1"/>
</dbReference>
<dbReference type="PRINTS" id="PR01042">
    <property type="entry name" value="TRNASYNTHASP"/>
</dbReference>
<dbReference type="SUPFAM" id="SSF55681">
    <property type="entry name" value="Class II aaRS and biotin synthetases"/>
    <property type="match status" value="1"/>
</dbReference>
<dbReference type="SUPFAM" id="SSF55261">
    <property type="entry name" value="GAD domain-like"/>
    <property type="match status" value="1"/>
</dbReference>
<dbReference type="SUPFAM" id="SSF50249">
    <property type="entry name" value="Nucleic acid-binding proteins"/>
    <property type="match status" value="1"/>
</dbReference>
<dbReference type="PROSITE" id="PS50862">
    <property type="entry name" value="AA_TRNA_LIGASE_II"/>
    <property type="match status" value="1"/>
</dbReference>
<sequence>MKRSMYAGRVREEHIGTTITLKGWVSRRRDLGGLIFIDLRDREGVMQLVINPEEVSSDVMATAERLRSEYVIEVEGFVEARQQANDKLATGMVELKVSALTILNTAKTTPFEIKDDVEVSDDTRLRYRYLDLRRPEMLENFKLRAKVTHSIRNYLDDLEFIDVETPMLTKSTPEGARDYLVPSRVSQGHFYALPQSPQITKQLLMNAGFDRYYQIVKCFRDEDLRGDRQPEFTQVDLETSFLSEQEIQDIVEGMIAKVMKETKEIDVTLPFPRMSYDVAMNSYGSDKPDTRFEMLLQDLTVTVKGIDFKVFSEAPAVKAIVVKGNADRYSRKDIDKLTEFAKQFGAKGLAWVKVTDGQLAGPVAKFLTAIETELSSQLKLAENDLVLFVADTLEVANNTLGALRNRIAKDLDMIDQSQFNFLWVVDWPMFEWSEEEGRYMSAHHPFTLPTPESAHELEGDLAKVRAIAYDIVLNGYELGGGSLRINQKEMQERMFKALGFTADEANDQFGFLLEAMDYGFPPHGGLAIGLDRFVMLLAGKDNIREVIAFPKNNKASDPMTQAPSLVSENQLEELSLQIESHD</sequence>
<organism>
    <name type="scientific">Streptococcus pyogenes serotype M49 (strain NZ131)</name>
    <dbReference type="NCBI Taxonomy" id="471876"/>
    <lineage>
        <taxon>Bacteria</taxon>
        <taxon>Bacillati</taxon>
        <taxon>Bacillota</taxon>
        <taxon>Bacilli</taxon>
        <taxon>Lactobacillales</taxon>
        <taxon>Streptococcaceae</taxon>
        <taxon>Streptococcus</taxon>
    </lineage>
</organism>
<comment type="function">
    <text evidence="1">Catalyzes the attachment of L-aspartate to tRNA(Asp) in a two-step reaction: L-aspartate is first activated by ATP to form Asp-AMP and then transferred to the acceptor end of tRNA(Asp).</text>
</comment>
<comment type="catalytic activity">
    <reaction evidence="1">
        <text>tRNA(Asp) + L-aspartate + ATP = L-aspartyl-tRNA(Asp) + AMP + diphosphate</text>
        <dbReference type="Rhea" id="RHEA:19649"/>
        <dbReference type="Rhea" id="RHEA-COMP:9660"/>
        <dbReference type="Rhea" id="RHEA-COMP:9678"/>
        <dbReference type="ChEBI" id="CHEBI:29991"/>
        <dbReference type="ChEBI" id="CHEBI:30616"/>
        <dbReference type="ChEBI" id="CHEBI:33019"/>
        <dbReference type="ChEBI" id="CHEBI:78442"/>
        <dbReference type="ChEBI" id="CHEBI:78516"/>
        <dbReference type="ChEBI" id="CHEBI:456215"/>
        <dbReference type="EC" id="6.1.1.12"/>
    </reaction>
</comment>
<comment type="subunit">
    <text evidence="1">Homodimer.</text>
</comment>
<comment type="subcellular location">
    <subcellularLocation>
        <location evidence="1">Cytoplasm</location>
    </subcellularLocation>
</comment>
<comment type="similarity">
    <text evidence="1">Belongs to the class-II aminoacyl-tRNA synthetase family. Type 1 subfamily.</text>
</comment>
<gene>
    <name evidence="1" type="primary">aspS</name>
    <name type="ordered locus">Spy49_1768c</name>
</gene>
<reference key="1">
    <citation type="journal article" date="2008" name="J. Bacteriol.">
        <title>Genome sequence of a nephritogenic and highly transformable M49 strain of Streptococcus pyogenes.</title>
        <authorList>
            <person name="McShan W.M."/>
            <person name="Ferretti J.J."/>
            <person name="Karasawa T."/>
            <person name="Suvorov A.N."/>
            <person name="Lin S."/>
            <person name="Qin B."/>
            <person name="Jia H."/>
            <person name="Kenton S."/>
            <person name="Najar F."/>
            <person name="Wu H."/>
            <person name="Scott J."/>
            <person name="Roe B.A."/>
            <person name="Savic D.J."/>
        </authorList>
    </citation>
    <scope>NUCLEOTIDE SEQUENCE [LARGE SCALE GENOMIC DNA]</scope>
    <source>
        <strain>NZ131</strain>
    </source>
</reference>
<keyword id="KW-0030">Aminoacyl-tRNA synthetase</keyword>
<keyword id="KW-0067">ATP-binding</keyword>
<keyword id="KW-0963">Cytoplasm</keyword>
<keyword id="KW-0436">Ligase</keyword>
<keyword id="KW-0547">Nucleotide-binding</keyword>
<keyword id="KW-0648">Protein biosynthesis</keyword>
<proteinExistence type="inferred from homology"/>
<evidence type="ECO:0000255" key="1">
    <source>
        <dbReference type="HAMAP-Rule" id="MF_00044"/>
    </source>
</evidence>
<name>SYD_STRPZ</name>
<protein>
    <recommendedName>
        <fullName evidence="1">Aspartate--tRNA ligase</fullName>
        <ecNumber evidence="1">6.1.1.12</ecNumber>
    </recommendedName>
    <alternativeName>
        <fullName evidence="1">Aspartyl-tRNA synthetase</fullName>
        <shortName evidence="1">AspRS</shortName>
    </alternativeName>
</protein>
<accession>B5XJ82</accession>